<keyword id="KW-0067">ATP-binding</keyword>
<keyword id="KW-0436">Ligase</keyword>
<keyword id="KW-0547">Nucleotide-binding</keyword>
<keyword id="KW-0648">Protein biosynthesis</keyword>
<feature type="chain" id="PRO_1000203082" description="Aspartyl/glutamyl-tRNA(Asn/Gln) amidotransferase subunit C">
    <location>
        <begin position="1"/>
        <end position="97"/>
    </location>
</feature>
<feature type="region of interest" description="Disordered" evidence="2">
    <location>
        <begin position="58"/>
        <end position="78"/>
    </location>
</feature>
<feature type="compositionally biased region" description="Basic and acidic residues" evidence="2">
    <location>
        <begin position="63"/>
        <end position="77"/>
    </location>
</feature>
<evidence type="ECO:0000255" key="1">
    <source>
        <dbReference type="HAMAP-Rule" id="MF_00122"/>
    </source>
</evidence>
<evidence type="ECO:0000256" key="2">
    <source>
        <dbReference type="SAM" id="MobiDB-lite"/>
    </source>
</evidence>
<sequence>MKIEVNKNLIKHLENLSLIQLSQNEEKMLENDITNIIKFFEKINELDLSNVEPLFHPLPQGRLRKDTPRDPLDRENALKNVKRKENGYIVGPRTYGE</sequence>
<accession>C3MPQ0</accession>
<proteinExistence type="inferred from homology"/>
<dbReference type="EC" id="6.3.5.-" evidence="1"/>
<dbReference type="EMBL" id="CP001399">
    <property type="protein sequence ID" value="ACP35363.1"/>
    <property type="molecule type" value="Genomic_DNA"/>
</dbReference>
<dbReference type="RefSeq" id="WP_012711275.1">
    <property type="nucleotide sequence ID" value="NC_012589.1"/>
</dbReference>
<dbReference type="SMR" id="C3MPQ0"/>
<dbReference type="GeneID" id="84061583"/>
<dbReference type="KEGG" id="sis:LS215_1355"/>
<dbReference type="HOGENOM" id="CLU_105899_4_1_2"/>
<dbReference type="OrthoDB" id="35548at2157"/>
<dbReference type="Proteomes" id="UP000001747">
    <property type="component" value="Chromosome"/>
</dbReference>
<dbReference type="GO" id="GO:0050566">
    <property type="term" value="F:asparaginyl-tRNA synthase (glutamine-hydrolyzing) activity"/>
    <property type="evidence" value="ECO:0007669"/>
    <property type="project" value="RHEA"/>
</dbReference>
<dbReference type="GO" id="GO:0005524">
    <property type="term" value="F:ATP binding"/>
    <property type="evidence" value="ECO:0007669"/>
    <property type="project" value="UniProtKB-KW"/>
</dbReference>
<dbReference type="GO" id="GO:0050567">
    <property type="term" value="F:glutaminyl-tRNA synthase (glutamine-hydrolyzing) activity"/>
    <property type="evidence" value="ECO:0007669"/>
    <property type="project" value="UniProtKB-UniRule"/>
</dbReference>
<dbReference type="GO" id="GO:0070681">
    <property type="term" value="P:glutaminyl-tRNAGln biosynthesis via transamidation"/>
    <property type="evidence" value="ECO:0007669"/>
    <property type="project" value="TreeGrafter"/>
</dbReference>
<dbReference type="GO" id="GO:0006450">
    <property type="term" value="P:regulation of translational fidelity"/>
    <property type="evidence" value="ECO:0007669"/>
    <property type="project" value="InterPro"/>
</dbReference>
<dbReference type="GO" id="GO:0006412">
    <property type="term" value="P:translation"/>
    <property type="evidence" value="ECO:0007669"/>
    <property type="project" value="UniProtKB-UniRule"/>
</dbReference>
<dbReference type="Gene3D" id="1.10.20.60">
    <property type="entry name" value="Glu-tRNAGln amidotransferase C subunit, N-terminal domain"/>
    <property type="match status" value="1"/>
</dbReference>
<dbReference type="HAMAP" id="MF_00122">
    <property type="entry name" value="GatC"/>
    <property type="match status" value="1"/>
</dbReference>
<dbReference type="InterPro" id="IPR036113">
    <property type="entry name" value="Asp/Glu-ADT_sf_sub_c"/>
</dbReference>
<dbReference type="InterPro" id="IPR003837">
    <property type="entry name" value="GatC"/>
</dbReference>
<dbReference type="NCBIfam" id="TIGR00135">
    <property type="entry name" value="gatC"/>
    <property type="match status" value="1"/>
</dbReference>
<dbReference type="NCBIfam" id="NF000684">
    <property type="entry name" value="PRK00034.3-4"/>
    <property type="match status" value="1"/>
</dbReference>
<dbReference type="PANTHER" id="PTHR15004">
    <property type="entry name" value="GLUTAMYL-TRNA(GLN) AMIDOTRANSFERASE SUBUNIT C, MITOCHONDRIAL"/>
    <property type="match status" value="1"/>
</dbReference>
<dbReference type="PANTHER" id="PTHR15004:SF0">
    <property type="entry name" value="GLUTAMYL-TRNA(GLN) AMIDOTRANSFERASE SUBUNIT C, MITOCHONDRIAL"/>
    <property type="match status" value="1"/>
</dbReference>
<dbReference type="Pfam" id="PF02686">
    <property type="entry name" value="GatC"/>
    <property type="match status" value="1"/>
</dbReference>
<dbReference type="SUPFAM" id="SSF141000">
    <property type="entry name" value="Glu-tRNAGln amidotransferase C subunit"/>
    <property type="match status" value="1"/>
</dbReference>
<organism>
    <name type="scientific">Saccharolobus islandicus (strain L.S.2.15 / Lassen #1)</name>
    <name type="common">Sulfolobus islandicus</name>
    <dbReference type="NCBI Taxonomy" id="429572"/>
    <lineage>
        <taxon>Archaea</taxon>
        <taxon>Thermoproteota</taxon>
        <taxon>Thermoprotei</taxon>
        <taxon>Sulfolobales</taxon>
        <taxon>Sulfolobaceae</taxon>
        <taxon>Saccharolobus</taxon>
    </lineage>
</organism>
<comment type="function">
    <text evidence="1">Allows the formation of correctly charged Asn-tRNA(Asn) or Gln-tRNA(Gln) through the transamidation of misacylated Asp-tRNA(Asn) or Glu-tRNA(Gln) in organisms which lack either or both of asparaginyl-tRNA or glutaminyl-tRNA synthetases. The reaction takes place in the presence of glutamine and ATP through an activated phospho-Asp-tRNA(Asn) or phospho-Glu-tRNA(Gln).</text>
</comment>
<comment type="catalytic activity">
    <reaction evidence="1">
        <text>L-glutamyl-tRNA(Gln) + L-glutamine + ATP + H2O = L-glutaminyl-tRNA(Gln) + L-glutamate + ADP + phosphate + H(+)</text>
        <dbReference type="Rhea" id="RHEA:17521"/>
        <dbReference type="Rhea" id="RHEA-COMP:9681"/>
        <dbReference type="Rhea" id="RHEA-COMP:9684"/>
        <dbReference type="ChEBI" id="CHEBI:15377"/>
        <dbReference type="ChEBI" id="CHEBI:15378"/>
        <dbReference type="ChEBI" id="CHEBI:29985"/>
        <dbReference type="ChEBI" id="CHEBI:30616"/>
        <dbReference type="ChEBI" id="CHEBI:43474"/>
        <dbReference type="ChEBI" id="CHEBI:58359"/>
        <dbReference type="ChEBI" id="CHEBI:78520"/>
        <dbReference type="ChEBI" id="CHEBI:78521"/>
        <dbReference type="ChEBI" id="CHEBI:456216"/>
    </reaction>
</comment>
<comment type="catalytic activity">
    <reaction evidence="1">
        <text>L-aspartyl-tRNA(Asn) + L-glutamine + ATP + H2O = L-asparaginyl-tRNA(Asn) + L-glutamate + ADP + phosphate + 2 H(+)</text>
        <dbReference type="Rhea" id="RHEA:14513"/>
        <dbReference type="Rhea" id="RHEA-COMP:9674"/>
        <dbReference type="Rhea" id="RHEA-COMP:9677"/>
        <dbReference type="ChEBI" id="CHEBI:15377"/>
        <dbReference type="ChEBI" id="CHEBI:15378"/>
        <dbReference type="ChEBI" id="CHEBI:29985"/>
        <dbReference type="ChEBI" id="CHEBI:30616"/>
        <dbReference type="ChEBI" id="CHEBI:43474"/>
        <dbReference type="ChEBI" id="CHEBI:58359"/>
        <dbReference type="ChEBI" id="CHEBI:78515"/>
        <dbReference type="ChEBI" id="CHEBI:78516"/>
        <dbReference type="ChEBI" id="CHEBI:456216"/>
    </reaction>
</comment>
<comment type="subunit">
    <text evidence="1">Heterotrimer of A, B and C subunits.</text>
</comment>
<comment type="similarity">
    <text evidence="1">Belongs to the GatC family.</text>
</comment>
<reference key="1">
    <citation type="journal article" date="2009" name="Proc. Natl. Acad. Sci. U.S.A.">
        <title>Biogeography of the Sulfolobus islandicus pan-genome.</title>
        <authorList>
            <person name="Reno M.L."/>
            <person name="Held N.L."/>
            <person name="Fields C.J."/>
            <person name="Burke P.V."/>
            <person name="Whitaker R.J."/>
        </authorList>
    </citation>
    <scope>NUCLEOTIDE SEQUENCE [LARGE SCALE GENOMIC DNA]</scope>
    <source>
        <strain>L.S.2.15 / Lassen #1</strain>
    </source>
</reference>
<protein>
    <recommendedName>
        <fullName evidence="1">Aspartyl/glutamyl-tRNA(Asn/Gln) amidotransferase subunit C</fullName>
        <shortName evidence="1">Asp/Glu-ADT subunit C</shortName>
        <ecNumber evidence="1">6.3.5.-</ecNumber>
    </recommendedName>
</protein>
<gene>
    <name evidence="1" type="primary">gatC</name>
    <name type="ordered locus">LS215_1355</name>
</gene>
<name>GATC_SACI2</name>